<gene>
    <name evidence="2" type="primary">smoA</name>
    <name evidence="4" type="ordered locus">Atu3277</name>
</gene>
<keyword id="KW-0285">Flavoprotein</keyword>
<keyword id="KW-0288">FMN</keyword>
<keyword id="KW-0503">Monooxygenase</keyword>
<keyword id="KW-0520">NAD</keyword>
<keyword id="KW-0560">Oxidoreductase</keyword>
<keyword id="KW-1185">Reference proteome</keyword>
<accession>Q7CS24</accession>
<sequence length="174" mass="18660">MTVVEAIKMPNEHVFVPGGENSRSFRNALGAFTTGVTVVTATTPEGPIGMTVNSFASVSLDPPLVLWSPAKSSSRHPAFSEATHFAIHVLSADQDVLSARFTRNGRAFDDLDWEINDEGVPVIPGTLARFECRRAAAHDAGDHTIIVGEVLRAAHRDGDPLCFSGGAFGRFSRQ</sequence>
<protein>
    <recommendedName>
        <fullName evidence="3">FMN reductase (NADH) SmoA</fullName>
        <ecNumber evidence="1">1.5.1.42</ecNumber>
    </recommendedName>
    <alternativeName>
        <fullName evidence="2">Flavin mononucleotide reductase</fullName>
    </alternativeName>
    <alternativeName>
        <fullName evidence="2">SQ monooxygenase cluster protein A</fullName>
    </alternativeName>
</protein>
<reference key="1">
    <citation type="journal article" date="2001" name="Science">
        <title>The genome of the natural genetic engineer Agrobacterium tumefaciens C58.</title>
        <authorList>
            <person name="Wood D.W."/>
            <person name="Setubal J.C."/>
            <person name="Kaul R."/>
            <person name="Monks D.E."/>
            <person name="Kitajima J.P."/>
            <person name="Okura V.K."/>
            <person name="Zhou Y."/>
            <person name="Chen L."/>
            <person name="Wood G.E."/>
            <person name="Almeida N.F. Jr."/>
            <person name="Woo L."/>
            <person name="Chen Y."/>
            <person name="Paulsen I.T."/>
            <person name="Eisen J.A."/>
            <person name="Karp P.D."/>
            <person name="Bovee D. Sr."/>
            <person name="Chapman P."/>
            <person name="Clendenning J."/>
            <person name="Deatherage G."/>
            <person name="Gillet W."/>
            <person name="Grant C."/>
            <person name="Kutyavin T."/>
            <person name="Levy R."/>
            <person name="Li M.-J."/>
            <person name="McClelland E."/>
            <person name="Palmieri A."/>
            <person name="Raymond C."/>
            <person name="Rouse G."/>
            <person name="Saenphimmachak C."/>
            <person name="Wu Z."/>
            <person name="Romero P."/>
            <person name="Gordon D."/>
            <person name="Zhang S."/>
            <person name="Yoo H."/>
            <person name="Tao Y."/>
            <person name="Biddle P."/>
            <person name="Jung M."/>
            <person name="Krespan W."/>
            <person name="Perry M."/>
            <person name="Gordon-Kamm B."/>
            <person name="Liao L."/>
            <person name="Kim S."/>
            <person name="Hendrick C."/>
            <person name="Zhao Z.-Y."/>
            <person name="Dolan M."/>
            <person name="Chumley F."/>
            <person name="Tingey S.V."/>
            <person name="Tomb J.-F."/>
            <person name="Gordon M.P."/>
            <person name="Olson M.V."/>
            <person name="Nester E.W."/>
        </authorList>
    </citation>
    <scope>NUCLEOTIDE SEQUENCE [LARGE SCALE GENOMIC DNA]</scope>
    <source>
        <strain>C58 / ATCC 33970</strain>
    </source>
</reference>
<reference key="2">
    <citation type="journal article" date="2001" name="Science">
        <title>Genome sequence of the plant pathogen and biotechnology agent Agrobacterium tumefaciens C58.</title>
        <authorList>
            <person name="Goodner B."/>
            <person name="Hinkle G."/>
            <person name="Gattung S."/>
            <person name="Miller N."/>
            <person name="Blanchard M."/>
            <person name="Qurollo B."/>
            <person name="Goldman B.S."/>
            <person name="Cao Y."/>
            <person name="Askenazi M."/>
            <person name="Halling C."/>
            <person name="Mullin L."/>
            <person name="Houmiel K."/>
            <person name="Gordon J."/>
            <person name="Vaudin M."/>
            <person name="Iartchouk O."/>
            <person name="Epp A."/>
            <person name="Liu F."/>
            <person name="Wollam C."/>
            <person name="Allinger M."/>
            <person name="Doughty D."/>
            <person name="Scott C."/>
            <person name="Lappas C."/>
            <person name="Markelz B."/>
            <person name="Flanagan C."/>
            <person name="Crowell C."/>
            <person name="Gurson J."/>
            <person name="Lomo C."/>
            <person name="Sear C."/>
            <person name="Strub G."/>
            <person name="Cielo C."/>
            <person name="Slater S."/>
        </authorList>
    </citation>
    <scope>NUCLEOTIDE SEQUENCE [LARGE SCALE GENOMIC DNA]</scope>
    <source>
        <strain>C58 / ATCC 33970</strain>
    </source>
</reference>
<reference key="3">
    <citation type="journal article" date="2022" name="Proc. Natl. Acad. Sci. U.S.A.">
        <title>Oxidative desulfurization pathway for complete catabolism of sulfoquinovose by bacteria.</title>
        <authorList>
            <person name="Sharma M."/>
            <person name="Lingford J.P."/>
            <person name="Petricevic M."/>
            <person name="Snow A.J.D."/>
            <person name="Zhang Y."/>
            <person name="Jaervaa M.A."/>
            <person name="Mui J.W."/>
            <person name="Scott N.E."/>
            <person name="Saunders E.C."/>
            <person name="Mao R."/>
            <person name="Epa R."/>
            <person name="da Silva B.M."/>
            <person name="Pires D.E.V."/>
            <person name="Ascher D.B."/>
            <person name="McConville M.J."/>
            <person name="Davies G.J."/>
            <person name="Williams S.J."/>
            <person name="Goddard-Borger E.D."/>
        </authorList>
    </citation>
    <scope>FUNCTION</scope>
    <scope>CATALYTIC ACTIVITY</scope>
    <scope>BIOPHYSICOCHEMICAL PROPERTIES</scope>
    <scope>INDUCTION</scope>
    <source>
        <strain>C58 / ATCC 33970</strain>
    </source>
</reference>
<organism>
    <name type="scientific">Agrobacterium fabrum (strain C58 / ATCC 33970)</name>
    <name type="common">Agrobacterium tumefaciens (strain C58)</name>
    <dbReference type="NCBI Taxonomy" id="176299"/>
    <lineage>
        <taxon>Bacteria</taxon>
        <taxon>Pseudomonadati</taxon>
        <taxon>Pseudomonadota</taxon>
        <taxon>Alphaproteobacteria</taxon>
        <taxon>Hyphomicrobiales</taxon>
        <taxon>Rhizobiaceae</taxon>
        <taxon>Rhizobium/Agrobacterium group</taxon>
        <taxon>Agrobacterium</taxon>
        <taxon>Agrobacterium tumefaciens complex</taxon>
    </lineage>
</organism>
<evidence type="ECO:0000269" key="1">
    <source>
    </source>
</evidence>
<evidence type="ECO:0000303" key="2">
    <source>
    </source>
</evidence>
<evidence type="ECO:0000305" key="3"/>
<evidence type="ECO:0000312" key="4">
    <source>
        <dbReference type="EMBL" id="AAK90113.2"/>
    </source>
</evidence>
<dbReference type="EC" id="1.5.1.42" evidence="1"/>
<dbReference type="EMBL" id="AE007870">
    <property type="protein sequence ID" value="AAK90113.2"/>
    <property type="molecule type" value="Genomic_DNA"/>
</dbReference>
<dbReference type="RefSeq" id="NP_357328.2">
    <property type="nucleotide sequence ID" value="NC_003063.2"/>
</dbReference>
<dbReference type="RefSeq" id="WP_010972905.1">
    <property type="nucleotide sequence ID" value="NC_003063.2"/>
</dbReference>
<dbReference type="SMR" id="Q7CS24"/>
<dbReference type="STRING" id="176299.Atu3277"/>
<dbReference type="EnsemblBacteria" id="AAK90113">
    <property type="protein sequence ID" value="AAK90113"/>
    <property type="gene ID" value="Atu3277"/>
</dbReference>
<dbReference type="GeneID" id="1135151"/>
<dbReference type="KEGG" id="atu:Atu3277"/>
<dbReference type="PATRIC" id="fig|176299.10.peg.3118"/>
<dbReference type="eggNOG" id="COG1853">
    <property type="taxonomic scope" value="Bacteria"/>
</dbReference>
<dbReference type="HOGENOM" id="CLU_059021_1_0_5"/>
<dbReference type="OrthoDB" id="9792858at2"/>
<dbReference type="PhylomeDB" id="Q7CS24"/>
<dbReference type="BioCyc" id="AGRO:ATU3277-MONOMER"/>
<dbReference type="Proteomes" id="UP000000813">
    <property type="component" value="Chromosome linear"/>
</dbReference>
<dbReference type="GO" id="GO:0010181">
    <property type="term" value="F:FMN binding"/>
    <property type="evidence" value="ECO:0007669"/>
    <property type="project" value="InterPro"/>
</dbReference>
<dbReference type="GO" id="GO:0004497">
    <property type="term" value="F:monooxygenase activity"/>
    <property type="evidence" value="ECO:0007669"/>
    <property type="project" value="UniProtKB-KW"/>
</dbReference>
<dbReference type="GO" id="GO:0042602">
    <property type="term" value="F:riboflavin reductase (NADPH) activity"/>
    <property type="evidence" value="ECO:0007669"/>
    <property type="project" value="TreeGrafter"/>
</dbReference>
<dbReference type="Gene3D" id="2.30.110.10">
    <property type="entry name" value="Electron Transport, Fmn-binding Protein, Chain A"/>
    <property type="match status" value="1"/>
</dbReference>
<dbReference type="InterPro" id="IPR002563">
    <property type="entry name" value="Flavin_Rdtase-like_dom"/>
</dbReference>
<dbReference type="InterPro" id="IPR050268">
    <property type="entry name" value="NADH-dep_flavin_reductase"/>
</dbReference>
<dbReference type="InterPro" id="IPR012349">
    <property type="entry name" value="Split_barrel_FMN-bd"/>
</dbReference>
<dbReference type="PANTHER" id="PTHR30466">
    <property type="entry name" value="FLAVIN REDUCTASE"/>
    <property type="match status" value="1"/>
</dbReference>
<dbReference type="PANTHER" id="PTHR30466:SF11">
    <property type="entry name" value="FLAVIN-DEPENDENT MONOOXYGENASE, REDUCTASE SUBUNIT HSAB"/>
    <property type="match status" value="1"/>
</dbReference>
<dbReference type="Pfam" id="PF01613">
    <property type="entry name" value="Flavin_Reduct"/>
    <property type="match status" value="1"/>
</dbReference>
<dbReference type="SMART" id="SM00903">
    <property type="entry name" value="Flavin_Reduct"/>
    <property type="match status" value="1"/>
</dbReference>
<dbReference type="SUPFAM" id="SSF50475">
    <property type="entry name" value="FMN-binding split barrel"/>
    <property type="match status" value="1"/>
</dbReference>
<name>SMOA_AGRFC</name>
<feature type="chain" id="PRO_0000458927" description="FMN reductase (NADH) SmoA">
    <location>
        <begin position="1"/>
        <end position="174"/>
    </location>
</feature>
<proteinExistence type="evidence at protein level"/>
<comment type="function">
    <text evidence="1">Part of the sulfoquinovose monooxygenase (sulfo-SMO) pathway, a D-sulfoquinovose degradation pathway that enables the complete utilization of all carbons within sulfoquinovose (SQ) with concomitant production of inorganic sulfite (PubMed:35074914). Catalyzes the NADH-dependent reduction of FMN (PubMed:35074914). FMNH(2) is then transferred to the sulfoquinovose monooxygenase SmoC (PubMed:35074914).</text>
</comment>
<comment type="catalytic activity">
    <reaction evidence="1">
        <text>FMNH2 + NAD(+) = FMN + NADH + 2 H(+)</text>
        <dbReference type="Rhea" id="RHEA:21620"/>
        <dbReference type="ChEBI" id="CHEBI:15378"/>
        <dbReference type="ChEBI" id="CHEBI:57540"/>
        <dbReference type="ChEBI" id="CHEBI:57618"/>
        <dbReference type="ChEBI" id="CHEBI:57945"/>
        <dbReference type="ChEBI" id="CHEBI:58210"/>
        <dbReference type="EC" id="1.5.1.42"/>
    </reaction>
    <physiologicalReaction direction="right-to-left" evidence="1">
        <dbReference type="Rhea" id="RHEA:21622"/>
    </physiologicalReaction>
</comment>
<comment type="biophysicochemical properties">
    <kinetics>
        <KM evidence="1">35 uM for NADH</KM>
        <text evidence="1">kcat is 14.5 sec(-1) with NADH as substrate.</text>
    </kinetics>
</comment>
<comment type="induction">
    <text evidence="1">Induced during growth on sulfoquinovose.</text>
</comment>
<comment type="similarity">
    <text evidence="3">Belongs to the non-flavoprotein flavin reductase family.</text>
</comment>